<evidence type="ECO:0000255" key="1">
    <source>
        <dbReference type="HAMAP-Rule" id="MF_00291"/>
    </source>
</evidence>
<evidence type="ECO:0000256" key="2">
    <source>
        <dbReference type="SAM" id="MobiDB-lite"/>
    </source>
</evidence>
<evidence type="ECO:0000305" key="3"/>
<comment type="similarity">
    <text evidence="1">Belongs to the universal ribosomal protein uS2 family.</text>
</comment>
<reference key="1">
    <citation type="journal article" date="2001" name="Science">
        <title>Mechanisms of evolution in Rickettsia conorii and R. prowazekii.</title>
        <authorList>
            <person name="Ogata H."/>
            <person name="Audic S."/>
            <person name="Renesto-Audiffren P."/>
            <person name="Fournier P.-E."/>
            <person name="Barbe V."/>
            <person name="Samson D."/>
            <person name="Roux V."/>
            <person name="Cossart P."/>
            <person name="Weissenbach J."/>
            <person name="Claverie J.-M."/>
            <person name="Raoult D."/>
        </authorList>
    </citation>
    <scope>NUCLEOTIDE SEQUENCE [LARGE SCALE GENOMIC DNA]</scope>
    <source>
        <strain>ATCC VR-613 / Malish 7</strain>
    </source>
</reference>
<sequence>MSKIPSVNIKALLDAGVHFGHKTSRWNPKMASYIYGERDDVHIIDLRQSVALMSVALNAIYETVKKDGKILFVSTKIQASDIIAEYAEKCGQYYVNHRWLGGMLTNWKTIAGSIEKLNKLDKTLENEEALMGYTKKEILNMSRKKDKLLLSLAGIRNLNSKPDLLVVIDTNKEHIAINEAVKLNVPIVAVVDTNSNPDNVDYPIPGNDDSIRAIRLYCSLFADAALQGLEESMKASGVDMGAMQEHTDKGLTSKNVSKLKQTKKFSKTKNIDEETNTEFEQALNDADENKNSDNA</sequence>
<name>RS2_RICCN</name>
<keyword id="KW-0687">Ribonucleoprotein</keyword>
<keyword id="KW-0689">Ribosomal protein</keyword>
<proteinExistence type="inferred from homology"/>
<gene>
    <name evidence="1" type="primary">rpsB</name>
    <name type="ordered locus">RC0112</name>
</gene>
<feature type="chain" id="PRO_0000134227" description="Small ribosomal subunit protein uS2">
    <location>
        <begin position="1"/>
        <end position="295"/>
    </location>
</feature>
<feature type="region of interest" description="Disordered" evidence="2">
    <location>
        <begin position="247"/>
        <end position="295"/>
    </location>
</feature>
<dbReference type="EMBL" id="AE006914">
    <property type="protein sequence ID" value="AAL02650.1"/>
    <property type="molecule type" value="Genomic_DNA"/>
</dbReference>
<dbReference type="PIR" id="H97713">
    <property type="entry name" value="H97713"/>
</dbReference>
<dbReference type="RefSeq" id="WP_010976793.1">
    <property type="nucleotide sequence ID" value="NC_003103.1"/>
</dbReference>
<dbReference type="SMR" id="Q92JF5"/>
<dbReference type="GeneID" id="928082"/>
<dbReference type="KEGG" id="rco:RC0112"/>
<dbReference type="PATRIC" id="fig|272944.4.peg.133"/>
<dbReference type="HOGENOM" id="CLU_040318_2_1_5"/>
<dbReference type="Proteomes" id="UP000000816">
    <property type="component" value="Chromosome"/>
</dbReference>
<dbReference type="GO" id="GO:0022627">
    <property type="term" value="C:cytosolic small ribosomal subunit"/>
    <property type="evidence" value="ECO:0007669"/>
    <property type="project" value="TreeGrafter"/>
</dbReference>
<dbReference type="GO" id="GO:0003735">
    <property type="term" value="F:structural constituent of ribosome"/>
    <property type="evidence" value="ECO:0007669"/>
    <property type="project" value="InterPro"/>
</dbReference>
<dbReference type="GO" id="GO:0006412">
    <property type="term" value="P:translation"/>
    <property type="evidence" value="ECO:0007669"/>
    <property type="project" value="UniProtKB-UniRule"/>
</dbReference>
<dbReference type="CDD" id="cd01425">
    <property type="entry name" value="RPS2"/>
    <property type="match status" value="1"/>
</dbReference>
<dbReference type="Gene3D" id="3.40.50.10490">
    <property type="entry name" value="Glucose-6-phosphate isomerase like protein, domain 1"/>
    <property type="match status" value="1"/>
</dbReference>
<dbReference type="Gene3D" id="1.10.287.610">
    <property type="entry name" value="Helix hairpin bin"/>
    <property type="match status" value="1"/>
</dbReference>
<dbReference type="HAMAP" id="MF_00291_B">
    <property type="entry name" value="Ribosomal_uS2_B"/>
    <property type="match status" value="1"/>
</dbReference>
<dbReference type="InterPro" id="IPR001865">
    <property type="entry name" value="Ribosomal_uS2"/>
</dbReference>
<dbReference type="InterPro" id="IPR005706">
    <property type="entry name" value="Ribosomal_uS2_bac/mit/plastid"/>
</dbReference>
<dbReference type="InterPro" id="IPR018130">
    <property type="entry name" value="Ribosomal_uS2_CS"/>
</dbReference>
<dbReference type="InterPro" id="IPR023591">
    <property type="entry name" value="Ribosomal_uS2_flav_dom_sf"/>
</dbReference>
<dbReference type="NCBIfam" id="TIGR01011">
    <property type="entry name" value="rpsB_bact"/>
    <property type="match status" value="1"/>
</dbReference>
<dbReference type="PANTHER" id="PTHR12534">
    <property type="entry name" value="30S RIBOSOMAL PROTEIN S2 PROKARYOTIC AND ORGANELLAR"/>
    <property type="match status" value="1"/>
</dbReference>
<dbReference type="PANTHER" id="PTHR12534:SF0">
    <property type="entry name" value="SMALL RIBOSOMAL SUBUNIT PROTEIN US2M"/>
    <property type="match status" value="1"/>
</dbReference>
<dbReference type="Pfam" id="PF00318">
    <property type="entry name" value="Ribosomal_S2"/>
    <property type="match status" value="1"/>
</dbReference>
<dbReference type="PRINTS" id="PR00395">
    <property type="entry name" value="RIBOSOMALS2"/>
</dbReference>
<dbReference type="SUPFAM" id="SSF52313">
    <property type="entry name" value="Ribosomal protein S2"/>
    <property type="match status" value="1"/>
</dbReference>
<dbReference type="PROSITE" id="PS00962">
    <property type="entry name" value="RIBOSOMAL_S2_1"/>
    <property type="match status" value="1"/>
</dbReference>
<dbReference type="PROSITE" id="PS00963">
    <property type="entry name" value="RIBOSOMAL_S2_2"/>
    <property type="match status" value="1"/>
</dbReference>
<organism>
    <name type="scientific">Rickettsia conorii (strain ATCC VR-613 / Malish 7)</name>
    <dbReference type="NCBI Taxonomy" id="272944"/>
    <lineage>
        <taxon>Bacteria</taxon>
        <taxon>Pseudomonadati</taxon>
        <taxon>Pseudomonadota</taxon>
        <taxon>Alphaproteobacteria</taxon>
        <taxon>Rickettsiales</taxon>
        <taxon>Rickettsiaceae</taxon>
        <taxon>Rickettsieae</taxon>
        <taxon>Rickettsia</taxon>
        <taxon>spotted fever group</taxon>
    </lineage>
</organism>
<protein>
    <recommendedName>
        <fullName evidence="1">Small ribosomal subunit protein uS2</fullName>
    </recommendedName>
    <alternativeName>
        <fullName evidence="3">30S ribosomal protein S2</fullName>
    </alternativeName>
</protein>
<accession>Q92JF5</accession>